<comment type="catalytic activity">
    <reaction evidence="1">
        <text>L-histidinol phosphate + 2-oxoglutarate = 3-(imidazol-4-yl)-2-oxopropyl phosphate + L-glutamate</text>
        <dbReference type="Rhea" id="RHEA:23744"/>
        <dbReference type="ChEBI" id="CHEBI:16810"/>
        <dbReference type="ChEBI" id="CHEBI:29985"/>
        <dbReference type="ChEBI" id="CHEBI:57766"/>
        <dbReference type="ChEBI" id="CHEBI:57980"/>
        <dbReference type="EC" id="2.6.1.9"/>
    </reaction>
</comment>
<comment type="cofactor">
    <cofactor evidence="1">
        <name>pyridoxal 5'-phosphate</name>
        <dbReference type="ChEBI" id="CHEBI:597326"/>
    </cofactor>
</comment>
<comment type="pathway">
    <text evidence="1">Amino-acid biosynthesis; L-histidine biosynthesis; L-histidine from 5-phospho-alpha-D-ribose 1-diphosphate: step 7/9.</text>
</comment>
<comment type="subunit">
    <text evidence="1">Homodimer.</text>
</comment>
<comment type="similarity">
    <text evidence="1">Belongs to the class-II pyridoxal-phosphate-dependent aminotransferase family. Histidinol-phosphate aminotransferase subfamily.</text>
</comment>
<accession>B1HTD4</accession>
<gene>
    <name evidence="1" type="primary">hisC</name>
    <name type="ordered locus">Bsph_1963</name>
</gene>
<proteinExistence type="inferred from homology"/>
<sequence length="366" mass="40523">MKWKQQLDGMQAYKPGKPIEEVQREYGLKEVIKLASNENPFGCSPKVTAYLQNNAVNHALYPDGYAQNLRTAVANHLGVQETQLLFGNGSDDIIAIITRALLYPGVNTIMADLSFSQYWHNAEIEGAEIRKIPCVEGAHDLEAMAAAIDDQTAVIWVCSPNNPTGVVIPDTALRAFLAKVPNDVLVVLDEAYIEYVTHPEHKDTLPIIDQYPNVLLLRTFSKAYGLASFRVGYAIGQPTIIEKLDPVRGPFNNTSLSQAVAAIALSDQEYIEACREANEHGKKQYVEFCEKHNLKYFPSDTNFIFFDTKADSDVIFQELMKKGFIVRSGNALGLPGFIRVTIGTEAQNAALLVQLDNVLKEQGVFA</sequence>
<name>HIS8_LYSSC</name>
<dbReference type="EC" id="2.6.1.9" evidence="1"/>
<dbReference type="EMBL" id="CP000817">
    <property type="protein sequence ID" value="ACA39550.1"/>
    <property type="molecule type" value="Genomic_DNA"/>
</dbReference>
<dbReference type="RefSeq" id="WP_012293646.1">
    <property type="nucleotide sequence ID" value="NC_010382.1"/>
</dbReference>
<dbReference type="SMR" id="B1HTD4"/>
<dbReference type="EnsemblBacteria" id="ACA39550">
    <property type="protein sequence ID" value="ACA39550"/>
    <property type="gene ID" value="Bsph_1963"/>
</dbReference>
<dbReference type="KEGG" id="lsp:Bsph_1963"/>
<dbReference type="HOGENOM" id="CLU_017584_3_3_9"/>
<dbReference type="UniPathway" id="UPA00031">
    <property type="reaction ID" value="UER00012"/>
</dbReference>
<dbReference type="Proteomes" id="UP000002164">
    <property type="component" value="Chromosome"/>
</dbReference>
<dbReference type="GO" id="GO:0004400">
    <property type="term" value="F:histidinol-phosphate transaminase activity"/>
    <property type="evidence" value="ECO:0007669"/>
    <property type="project" value="UniProtKB-UniRule"/>
</dbReference>
<dbReference type="GO" id="GO:0030170">
    <property type="term" value="F:pyridoxal phosphate binding"/>
    <property type="evidence" value="ECO:0007669"/>
    <property type="project" value="InterPro"/>
</dbReference>
<dbReference type="GO" id="GO:0000105">
    <property type="term" value="P:L-histidine biosynthetic process"/>
    <property type="evidence" value="ECO:0007669"/>
    <property type="project" value="UniProtKB-UniRule"/>
</dbReference>
<dbReference type="CDD" id="cd00609">
    <property type="entry name" value="AAT_like"/>
    <property type="match status" value="1"/>
</dbReference>
<dbReference type="Gene3D" id="3.90.1150.10">
    <property type="entry name" value="Aspartate Aminotransferase, domain 1"/>
    <property type="match status" value="1"/>
</dbReference>
<dbReference type="Gene3D" id="3.40.640.10">
    <property type="entry name" value="Type I PLP-dependent aspartate aminotransferase-like (Major domain)"/>
    <property type="match status" value="1"/>
</dbReference>
<dbReference type="HAMAP" id="MF_01023">
    <property type="entry name" value="HisC_aminotrans_2"/>
    <property type="match status" value="1"/>
</dbReference>
<dbReference type="InterPro" id="IPR001917">
    <property type="entry name" value="Aminotrans_II_pyridoxalP_BS"/>
</dbReference>
<dbReference type="InterPro" id="IPR004839">
    <property type="entry name" value="Aminotransferase_I/II_large"/>
</dbReference>
<dbReference type="InterPro" id="IPR005861">
    <property type="entry name" value="HisP_aminotrans"/>
</dbReference>
<dbReference type="InterPro" id="IPR050106">
    <property type="entry name" value="HistidinolP_aminotransfase"/>
</dbReference>
<dbReference type="InterPro" id="IPR015424">
    <property type="entry name" value="PyrdxlP-dep_Trfase"/>
</dbReference>
<dbReference type="InterPro" id="IPR015421">
    <property type="entry name" value="PyrdxlP-dep_Trfase_major"/>
</dbReference>
<dbReference type="InterPro" id="IPR015422">
    <property type="entry name" value="PyrdxlP-dep_Trfase_small"/>
</dbReference>
<dbReference type="NCBIfam" id="TIGR01141">
    <property type="entry name" value="hisC"/>
    <property type="match status" value="1"/>
</dbReference>
<dbReference type="PANTHER" id="PTHR43643:SF3">
    <property type="entry name" value="HISTIDINOL-PHOSPHATE AMINOTRANSFERASE"/>
    <property type="match status" value="1"/>
</dbReference>
<dbReference type="PANTHER" id="PTHR43643">
    <property type="entry name" value="HISTIDINOL-PHOSPHATE AMINOTRANSFERASE 2"/>
    <property type="match status" value="1"/>
</dbReference>
<dbReference type="Pfam" id="PF00155">
    <property type="entry name" value="Aminotran_1_2"/>
    <property type="match status" value="1"/>
</dbReference>
<dbReference type="SUPFAM" id="SSF53383">
    <property type="entry name" value="PLP-dependent transferases"/>
    <property type="match status" value="1"/>
</dbReference>
<dbReference type="PROSITE" id="PS00599">
    <property type="entry name" value="AA_TRANSFER_CLASS_2"/>
    <property type="match status" value="1"/>
</dbReference>
<keyword id="KW-0028">Amino-acid biosynthesis</keyword>
<keyword id="KW-0032">Aminotransferase</keyword>
<keyword id="KW-0368">Histidine biosynthesis</keyword>
<keyword id="KW-0663">Pyridoxal phosphate</keyword>
<keyword id="KW-0808">Transferase</keyword>
<feature type="chain" id="PRO_1000135407" description="Histidinol-phosphate aminotransferase">
    <location>
        <begin position="1"/>
        <end position="366"/>
    </location>
</feature>
<feature type="modified residue" description="N6-(pyridoxal phosphate)lysine" evidence="1">
    <location>
        <position position="222"/>
    </location>
</feature>
<organism>
    <name type="scientific">Lysinibacillus sphaericus (strain C3-41)</name>
    <dbReference type="NCBI Taxonomy" id="444177"/>
    <lineage>
        <taxon>Bacteria</taxon>
        <taxon>Bacillati</taxon>
        <taxon>Bacillota</taxon>
        <taxon>Bacilli</taxon>
        <taxon>Bacillales</taxon>
        <taxon>Bacillaceae</taxon>
        <taxon>Lysinibacillus</taxon>
    </lineage>
</organism>
<reference key="1">
    <citation type="journal article" date="2008" name="J. Bacteriol.">
        <title>Complete genome sequence of the mosquitocidal bacterium Bacillus sphaericus C3-41 and comparison with those of closely related Bacillus species.</title>
        <authorList>
            <person name="Hu X."/>
            <person name="Fan W."/>
            <person name="Han B."/>
            <person name="Liu H."/>
            <person name="Zheng D."/>
            <person name="Li Q."/>
            <person name="Dong W."/>
            <person name="Yan J."/>
            <person name="Gao M."/>
            <person name="Berry C."/>
            <person name="Yuan Z."/>
        </authorList>
    </citation>
    <scope>NUCLEOTIDE SEQUENCE [LARGE SCALE GENOMIC DNA]</scope>
    <source>
        <strain>C3-41</strain>
    </source>
</reference>
<evidence type="ECO:0000255" key="1">
    <source>
        <dbReference type="HAMAP-Rule" id="MF_01023"/>
    </source>
</evidence>
<protein>
    <recommendedName>
        <fullName evidence="1">Histidinol-phosphate aminotransferase</fullName>
        <ecNumber evidence="1">2.6.1.9</ecNumber>
    </recommendedName>
    <alternativeName>
        <fullName evidence="1">Imidazole acetol-phosphate transaminase</fullName>
    </alternativeName>
</protein>